<dbReference type="EMBL" id="CF978128">
    <property type="status" value="NOT_ANNOTATED_CDS"/>
    <property type="molecule type" value="mRNA"/>
</dbReference>
<dbReference type="EMBL" id="AF090134">
    <property type="protein sequence ID" value="AAC78073.1"/>
    <property type="molecule type" value="mRNA"/>
</dbReference>
<dbReference type="EMBL" id="AF090135">
    <property type="protein sequence ID" value="AAC78074.1"/>
    <property type="molecule type" value="mRNA"/>
</dbReference>
<dbReference type="RefSeq" id="NP_445966.1">
    <property type="nucleotide sequence ID" value="NM_053514.1"/>
</dbReference>
<dbReference type="SMR" id="Q9Z250"/>
<dbReference type="BioGRID" id="250083">
    <property type="interactions" value="3"/>
</dbReference>
<dbReference type="CORUM" id="Q9Z250"/>
<dbReference type="FunCoup" id="Q9Z250">
    <property type="interactions" value="284"/>
</dbReference>
<dbReference type="IntAct" id="Q9Z250">
    <property type="interactions" value="2"/>
</dbReference>
<dbReference type="STRING" id="10116.ENSRNOP00000065432"/>
<dbReference type="iPTMnet" id="Q9Z250"/>
<dbReference type="PhosphoSitePlus" id="Q9Z250"/>
<dbReference type="PaxDb" id="10116-ENSRNOP00000006083"/>
<dbReference type="UCSC" id="RGD:621256">
    <molecule id="Q9Z250-1"/>
    <property type="organism name" value="rat"/>
</dbReference>
<dbReference type="AGR" id="RGD:621256"/>
<dbReference type="RGD" id="621256">
    <property type="gene designation" value="Lin7a"/>
</dbReference>
<dbReference type="eggNOG" id="KOG3550">
    <property type="taxonomic scope" value="Eukaryota"/>
</dbReference>
<dbReference type="InParanoid" id="Q9Z250"/>
<dbReference type="PhylomeDB" id="Q9Z250"/>
<dbReference type="Reactome" id="R-RNO-212676">
    <property type="pathway name" value="Dopamine Neurotransmitter Release Cycle"/>
</dbReference>
<dbReference type="PRO" id="PR:Q9Z250"/>
<dbReference type="Proteomes" id="UP000002494">
    <property type="component" value="Unplaced"/>
</dbReference>
<dbReference type="GO" id="GO:0016323">
    <property type="term" value="C:basolateral plasma membrane"/>
    <property type="evidence" value="ECO:0000314"/>
    <property type="project" value="RGD"/>
</dbReference>
<dbReference type="GO" id="GO:0005923">
    <property type="term" value="C:bicellular tight junction"/>
    <property type="evidence" value="ECO:0007669"/>
    <property type="project" value="UniProtKB-SubCell"/>
</dbReference>
<dbReference type="GO" id="GO:0005911">
    <property type="term" value="C:cell-cell junction"/>
    <property type="evidence" value="ECO:0000318"/>
    <property type="project" value="GO_Central"/>
</dbReference>
<dbReference type="GO" id="GO:0016020">
    <property type="term" value="C:membrane"/>
    <property type="evidence" value="ECO:0000266"/>
    <property type="project" value="RGD"/>
</dbReference>
<dbReference type="GO" id="GO:0097025">
    <property type="term" value="C:MPP7-DLG1-LIN7 complex"/>
    <property type="evidence" value="ECO:0000318"/>
    <property type="project" value="GO_Central"/>
</dbReference>
<dbReference type="GO" id="GO:0098839">
    <property type="term" value="C:postsynaptic density membrane"/>
    <property type="evidence" value="ECO:0007669"/>
    <property type="project" value="UniProtKB-SubCell"/>
</dbReference>
<dbReference type="GO" id="GO:0098793">
    <property type="term" value="C:presynapse"/>
    <property type="evidence" value="ECO:0007669"/>
    <property type="project" value="GOC"/>
</dbReference>
<dbReference type="GO" id="GO:0045202">
    <property type="term" value="C:synapse"/>
    <property type="evidence" value="ECO:0000314"/>
    <property type="project" value="SynGO"/>
</dbReference>
<dbReference type="GO" id="GO:0097016">
    <property type="term" value="F:L27 domain binding"/>
    <property type="evidence" value="ECO:0000266"/>
    <property type="project" value="RGD"/>
</dbReference>
<dbReference type="GO" id="GO:0030165">
    <property type="term" value="F:PDZ domain binding"/>
    <property type="evidence" value="ECO:0000353"/>
    <property type="project" value="RGD"/>
</dbReference>
<dbReference type="GO" id="GO:0030674">
    <property type="term" value="F:protein-macromolecule adaptor activity"/>
    <property type="evidence" value="ECO:0000318"/>
    <property type="project" value="GO_Central"/>
</dbReference>
<dbReference type="GO" id="GO:0006887">
    <property type="term" value="P:exocytosis"/>
    <property type="evidence" value="ECO:0007669"/>
    <property type="project" value="UniProtKB-KW"/>
</dbReference>
<dbReference type="GO" id="GO:0048839">
    <property type="term" value="P:inner ear development"/>
    <property type="evidence" value="ECO:0000266"/>
    <property type="project" value="RGD"/>
</dbReference>
<dbReference type="GO" id="GO:0007269">
    <property type="term" value="P:neurotransmitter secretion"/>
    <property type="evidence" value="ECO:0000266"/>
    <property type="project" value="RGD"/>
</dbReference>
<dbReference type="GO" id="GO:0015031">
    <property type="term" value="P:protein transport"/>
    <property type="evidence" value="ECO:0007669"/>
    <property type="project" value="UniProtKB-KW"/>
</dbReference>
<dbReference type="GO" id="GO:0008582">
    <property type="term" value="P:regulation of synaptic assembly at neuromuscular junction"/>
    <property type="evidence" value="ECO:0000318"/>
    <property type="project" value="GO_Central"/>
</dbReference>
<dbReference type="GO" id="GO:0048489">
    <property type="term" value="P:synaptic vesicle transport"/>
    <property type="evidence" value="ECO:0000266"/>
    <property type="project" value="RGD"/>
</dbReference>
<dbReference type="CDD" id="cd06796">
    <property type="entry name" value="PDZ_Lin-7-like"/>
    <property type="match status" value="1"/>
</dbReference>
<dbReference type="FunFam" id="2.30.42.10:FF:000076">
    <property type="entry name" value="Protein lin-7 homolog"/>
    <property type="match status" value="1"/>
</dbReference>
<dbReference type="Gene3D" id="2.30.42.10">
    <property type="match status" value="1"/>
</dbReference>
<dbReference type="Gene3D" id="1.10.287.650">
    <property type="entry name" value="L27 domain"/>
    <property type="match status" value="1"/>
</dbReference>
<dbReference type="InterPro" id="IPR014775">
    <property type="entry name" value="L27_C"/>
</dbReference>
<dbReference type="InterPro" id="IPR004172">
    <property type="entry name" value="L27_dom"/>
</dbReference>
<dbReference type="InterPro" id="IPR036892">
    <property type="entry name" value="L27_dom_sf"/>
</dbReference>
<dbReference type="InterPro" id="IPR017365">
    <property type="entry name" value="LIN7"/>
</dbReference>
<dbReference type="InterPro" id="IPR051109">
    <property type="entry name" value="MAM_complex_regulator"/>
</dbReference>
<dbReference type="InterPro" id="IPR001478">
    <property type="entry name" value="PDZ"/>
</dbReference>
<dbReference type="InterPro" id="IPR036034">
    <property type="entry name" value="PDZ_sf"/>
</dbReference>
<dbReference type="PANTHER" id="PTHR14063">
    <property type="entry name" value="PROTEIN LIN-7 HOMOLOG"/>
    <property type="match status" value="1"/>
</dbReference>
<dbReference type="Pfam" id="PF02828">
    <property type="entry name" value="L27"/>
    <property type="match status" value="1"/>
</dbReference>
<dbReference type="Pfam" id="PF00595">
    <property type="entry name" value="PDZ"/>
    <property type="match status" value="1"/>
</dbReference>
<dbReference type="PIRSF" id="PIRSF038039">
    <property type="entry name" value="Lin-7_homologue"/>
    <property type="match status" value="1"/>
</dbReference>
<dbReference type="SMART" id="SM00569">
    <property type="entry name" value="L27"/>
    <property type="match status" value="1"/>
</dbReference>
<dbReference type="SMART" id="SM00228">
    <property type="entry name" value="PDZ"/>
    <property type="match status" value="1"/>
</dbReference>
<dbReference type="SUPFAM" id="SSF101288">
    <property type="entry name" value="L27 domain"/>
    <property type="match status" value="1"/>
</dbReference>
<dbReference type="SUPFAM" id="SSF50156">
    <property type="entry name" value="PDZ domain-like"/>
    <property type="match status" value="1"/>
</dbReference>
<dbReference type="PROSITE" id="PS51022">
    <property type="entry name" value="L27"/>
    <property type="match status" value="1"/>
</dbReference>
<dbReference type="PROSITE" id="PS50106">
    <property type="entry name" value="PDZ"/>
    <property type="match status" value="1"/>
</dbReference>
<evidence type="ECO:0000250" key="1"/>
<evidence type="ECO:0000250" key="2">
    <source>
        <dbReference type="UniProtKB" id="Q8JZS0"/>
    </source>
</evidence>
<evidence type="ECO:0000255" key="3">
    <source>
        <dbReference type="PROSITE-ProRule" id="PRU00143"/>
    </source>
</evidence>
<evidence type="ECO:0000255" key="4">
    <source>
        <dbReference type="PROSITE-ProRule" id="PRU00365"/>
    </source>
</evidence>
<evidence type="ECO:0000269" key="5">
    <source>
    </source>
</evidence>
<evidence type="ECO:0000269" key="6">
    <source>
    </source>
</evidence>
<evidence type="ECO:0000269" key="7">
    <source>
    </source>
</evidence>
<evidence type="ECO:0000269" key="8">
    <source>
    </source>
</evidence>
<evidence type="ECO:0000269" key="9">
    <source>
    </source>
</evidence>
<evidence type="ECO:0000269" key="10">
    <source>
    </source>
</evidence>
<evidence type="ECO:0000269" key="11">
    <source>
    </source>
</evidence>
<evidence type="ECO:0000269" key="12">
    <source>
    </source>
</evidence>
<evidence type="ECO:0000269" key="13">
    <source>
    </source>
</evidence>
<evidence type="ECO:0000303" key="14">
    <source>
    </source>
</evidence>
<evidence type="ECO:0000305" key="15"/>
<keyword id="KW-0025">Alternative splicing</keyword>
<keyword id="KW-0965">Cell junction</keyword>
<keyword id="KW-1003">Cell membrane</keyword>
<keyword id="KW-0903">Direct protein sequencing</keyword>
<keyword id="KW-0268">Exocytosis</keyword>
<keyword id="KW-0472">Membrane</keyword>
<keyword id="KW-0628">Postsynaptic cell membrane</keyword>
<keyword id="KW-0653">Protein transport</keyword>
<keyword id="KW-1185">Reference proteome</keyword>
<keyword id="KW-0770">Synapse</keyword>
<keyword id="KW-0796">Tight junction</keyword>
<keyword id="KW-0813">Transport</keyword>
<feature type="chain" id="PRO_0000189625" description="Protein lin-7 homolog A">
    <location>
        <begin position="1"/>
        <end position="232"/>
    </location>
</feature>
<feature type="domain" description="L27" evidence="4">
    <location>
        <begin position="25"/>
        <end position="80"/>
    </location>
</feature>
<feature type="domain" description="PDZ" evidence="3">
    <location>
        <begin position="108"/>
        <end position="190"/>
    </location>
</feature>
<feature type="short sequence motif" description="Kinase interacting site" evidence="1">
    <location>
        <begin position="14"/>
        <end position="28"/>
    </location>
</feature>
<feature type="splice variant" id="VSP_012860" description="In isoform 2." evidence="14">
    <original>SVEGEHHEKAVELLKAAKDSVKLVVRYTPKVLEE</original>
    <variation>ALEEKLAGQSSNSHKFGNPCSGIPAHRKRKRKYQ</variation>
    <location>
        <begin position="162"/>
        <end position="195"/>
    </location>
</feature>
<feature type="splice variant" id="VSP_012861" description="In isoform 2." evidence="14">
    <location>
        <begin position="196"/>
        <end position="232"/>
    </location>
</feature>
<feature type="sequence conflict" description="In Ref. 2; AAC78074." evidence="15" ref="2">
    <original>L</original>
    <variation>P</variation>
    <location>
        <position position="39"/>
    </location>
</feature>
<feature type="sequence conflict" description="In Ref. 1; CF978128." evidence="15" ref="1">
    <original>P</original>
    <variation>A</variation>
    <location>
        <position position="112"/>
    </location>
</feature>
<accession>Q9Z250</accession>
<accession>Q9Z251</accession>
<sequence>MLKPSVTSAPTADMATLTVVQPLTLDRDVARAIELLEKLQESGEVPVHKLQSLKKVLQSEFCTAIREVYQYMHETITVNGCPEFRARATAKATVAAFAASEGHSHPRVVELPKTDEGLGFNVMGGKEQNSPIYISRIIPGGVAERHGGLKRGDQLLSVNGVSVEGEHHEKAVELLKAAKDSVKLVVRYTPKVLEEMEARFEKLRTARRRQQQQLLIQQQQQQQQQPQQNHMS</sequence>
<proteinExistence type="evidence at protein level"/>
<gene>
    <name type="primary">Lin7a</name>
    <name type="synonym">Mals1</name>
    <name type="synonym">Veli1</name>
</gene>
<protein>
    <recommendedName>
        <fullName>Protein lin-7 homolog A</fullName>
        <shortName>Lin-7A</shortName>
    </recommendedName>
    <alternativeName>
        <fullName>Mammalian lin-seven protein 1</fullName>
        <shortName>MALS-1</shortName>
    </alternativeName>
    <alternativeName>
        <fullName>Vertebrate lin-7 homolog 1</fullName>
        <shortName>Veli-1</shortName>
    </alternativeName>
</protein>
<reference key="1">
    <citation type="submission" date="2002-06" db="EMBL/GenBank/DDBJ databases">
        <title>Gene expression profiling of highly purified rat retinal ganglion cells.</title>
        <authorList>
            <person name="Farkas R.H."/>
            <person name="Qian J."/>
            <person name="Goldberg J.L."/>
            <person name="Quigley H.A."/>
            <person name="Zack D.J."/>
        </authorList>
    </citation>
    <scope>NUCLEOTIDE SEQUENCE [MRNA] OF 1-125</scope>
</reference>
<reference key="2">
    <citation type="journal article" date="1999" name="Oncogene">
        <title>Isolation and characterization of mammalian homologues of Caenorhabditis elegans lin-7: localization at cell-cell junctions.</title>
        <authorList>
            <person name="Irie M."/>
            <person name="Hata Y."/>
            <person name="Deguchi M."/>
            <person name="Ide N."/>
            <person name="Hirao K."/>
            <person name="Yao I."/>
            <person name="Nishioka H."/>
            <person name="Takai Y."/>
        </authorList>
    </citation>
    <scope>NUCLEOTIDE SEQUENCE [MRNA] OF 14-232 (ISOFORMS 1 AND 2)</scope>
    <scope>TISSUE SPECIFICITY</scope>
    <scope>SUBCELLULAR LOCATION</scope>
</reference>
<reference key="3">
    <citation type="journal article" date="2004" name="J. Biol. Chem.">
        <title>Protein trafficking and anchoring complexes revealed by proteomic analysis of inward rectifier potassium channel (Kir2.x)-associated proteins.</title>
        <authorList>
            <person name="Leonoudakis D."/>
            <person name="Conti L.R."/>
            <person name="Anderson S."/>
            <person name="Radeke C.M."/>
            <person name="McGuire L.M."/>
            <person name="Adams M.E."/>
            <person name="Froehner S.C."/>
            <person name="Yates J.R. III"/>
            <person name="Vandenberg C.A."/>
        </authorList>
    </citation>
    <scope>PROTEIN SEQUENCE OF 39-49; 86-107; 114-126; 151-170 AND 192-199</scope>
    <scope>INTERACTION WITH KCNJ12</scope>
</reference>
<reference key="4">
    <citation type="journal article" date="1998" name="Cell">
        <title>A tripartite protein complex with the potential to couple synaptic vesicle exocytosis to cell adhesion in brain.</title>
        <authorList>
            <person name="Butz S."/>
            <person name="Okamoto M."/>
            <person name="Suedhof T.C."/>
        </authorList>
    </citation>
    <scope>TISSUE SPECIFICITY</scope>
    <scope>INTERACTION WITH CASK AND APBA1</scope>
    <source>
        <tissue>Testis</tissue>
    </source>
</reference>
<reference key="5">
    <citation type="journal article" date="1999" name="J. Neurosci.">
        <title>Characterization of MALS/Velis-1, -2, and -3: a family of mammalian LIN-7 homologs enriched at brain synapses in association with the postsynaptic density-95/NMDA receptor postsynaptic complex.</title>
        <authorList>
            <person name="Jo K."/>
            <person name="Derin R."/>
            <person name="Li M."/>
            <person name="Bredt D.S."/>
        </authorList>
    </citation>
    <scope>TISSUE SPECIFICITY</scope>
    <scope>SUBCELLULAR LOCATION</scope>
    <scope>DEVELOPMENTAL STAGE</scope>
    <scope>INTERACTION WITH DLG4 AND GRIN2B</scope>
</reference>
<reference key="6">
    <citation type="journal article" date="2002" name="J. Biol. Chem.">
        <title>The expression of the PDZ protein MALS-1/velis is regulated by calcium and calcineurin in cerebellar granule cells.</title>
        <authorList>
            <person name="Sanna B."/>
            <person name="Kramer D."/>
            <person name="Genazzani A.A."/>
        </authorList>
    </citation>
    <scope>INDUCTION</scope>
</reference>
<reference key="7">
    <citation type="journal article" date="2002" name="J. Neurosci.">
        <title>CASK participates in alternative tripartite complexes in which Mint 1 competes for binding with Caskin 1, a novel CASK-binding protein.</title>
        <authorList>
            <person name="Tabuchi K."/>
            <person name="Biederer T."/>
            <person name="Butz S."/>
            <person name="Suedhof T.C."/>
        </authorList>
    </citation>
    <scope>INTERACTION WITH CASK; APBA1 AND CASKIN1</scope>
</reference>
<reference key="8">
    <citation type="journal article" date="2004" name="J. Biol. Chem.">
        <title>A multiprotein trafficking complex composed of SAP97, CASK, Veli, and Mint1 is associated with inward rectifier Kir2 potassium channels.</title>
        <authorList>
            <person name="Leonoudakis D."/>
            <person name="Conti L.R."/>
            <person name="Radeke C.M."/>
            <person name="McGuire L.M."/>
            <person name="Vandenberg C.A."/>
        </authorList>
    </citation>
    <scope>INTERACTION WITH KCNJ12; CASK AND DLG1</scope>
    <scope>FUNCTION</scope>
</reference>
<reference key="9">
    <citation type="journal article" date="2005" name="Am. J. Physiol.">
        <title>Differential localization of the Mammalian Lin 7 (MALS/Veli) PDZ proteins in the kidney.</title>
        <authorList>
            <person name="Olsen O."/>
            <person name="Wade J.B."/>
            <person name="Morin N."/>
            <person name="Bredt D.S."/>
            <person name="Welling P.A."/>
        </authorList>
    </citation>
    <scope>SUBCELLULAR LOCATION</scope>
    <scope>TISSUE SPECIFICITY</scope>
</reference>
<reference key="10">
    <citation type="journal article" date="2007" name="J. Biol. Chem.">
        <title>MARCH-XI, a novel transmembrane ubiquitin ligase implicated in ubiquitin-dependent protein sorting in developing spermatids.</title>
        <authorList>
            <person name="Morokuma Y."/>
            <person name="Nakamura N."/>
            <person name="Kato A."/>
            <person name="Notoya M."/>
            <person name="Yamamoto Y."/>
            <person name="Sakai Y."/>
            <person name="Fukuda H."/>
            <person name="Yamashina S."/>
            <person name="Hirata Y."/>
            <person name="Hirose S."/>
        </authorList>
    </citation>
    <scope>INTERACTION WITH MARCHF11</scope>
</reference>
<organism>
    <name type="scientific">Rattus norvegicus</name>
    <name type="common">Rat</name>
    <dbReference type="NCBI Taxonomy" id="10116"/>
    <lineage>
        <taxon>Eukaryota</taxon>
        <taxon>Metazoa</taxon>
        <taxon>Chordata</taxon>
        <taxon>Craniata</taxon>
        <taxon>Vertebrata</taxon>
        <taxon>Euteleostomi</taxon>
        <taxon>Mammalia</taxon>
        <taxon>Eutheria</taxon>
        <taxon>Euarchontoglires</taxon>
        <taxon>Glires</taxon>
        <taxon>Rodentia</taxon>
        <taxon>Myomorpha</taxon>
        <taxon>Muroidea</taxon>
        <taxon>Muridae</taxon>
        <taxon>Murinae</taxon>
        <taxon>Rattus</taxon>
    </lineage>
</organism>
<comment type="function">
    <text evidence="2 9">Plays a role in establishing and maintaining the asymmetric distribution of channels and receptors at the plasma membrane of polarized cells. Forms membrane-associated multiprotein complexes that may regulate delivery and recycling of proteins to the correct membrane domains. The tripartite complex composed of LIN7 (LIN7A, LIN7B or LIN7C), CASK and APBA1 associates with the motor protein KIF17 to transport vesicles containing N-methyl-D-aspartate (NMDA) receptor subunit NR2B along microtubules (By similarity). This complex may have the potential to couple synaptic vesicle exocytosis to cell adhesion in brain. Ensures the proper localization of GRIN2B (subunit 2B of the NMDA receptor) to neuronal postsynaptic density and may function in localizing synaptic vesicles at synapses where it is recruited by beta-catenin and cadherin. Required to localize Kir2 channels, GABA transporter (SLC6A12) and EGFR/ERBB1, ERBB2, ERBB3 and ERBB4 to the basolateral membrane of epithelial cells.</text>
</comment>
<comment type="subunit">
    <text evidence="1 2 5 7 9 10 12 13">Forms a complex with CASK and CASKIN1. Component of the brain-specific heterotrimeric complex (LIN-10-LIN-2-LIN-7 complex) composed of at least APBA1, CASK, and LIN7, which associates with the motor protein KIF17 to transport vesicles along microtubules (By similarity). Can also interact with other modular proteins containing protein-protein interaction domains like PALS1, PALS2, MPP7, DLG1, DLG2 and DLG3 through its L27 domain. Interacts with DLG4 and GRIN2B as well as CDH1 and CTNNB1, the channels KCNJ12/Kir2.2, KCNJ4/Kir2.3 and probably KCNJ2/Kir2.1 and SLC6A12/BGT-1 via its PDZ domain. The association of LIN7A with cadherin and beta-catenin is calcium-dependent, occurs at synaptic junctions and requires the actin cytoskeleton. Interacts with EGFR, ERBB2, ERBB3 and ERBB4 with both PDZ and KID domains. Associates with KIF17 via APBA1. Interacts with HTR4. Forms a tripartite complex composed of DLG1, MPP7 and LIN7 (LIN7A or LIN7C) (By similarity). Interacts with MARCHF11.</text>
</comment>
<comment type="subcellular location">
    <subcellularLocation>
        <location evidence="2">Cell membrane</location>
        <topology evidence="2">Peripheral membrane protein</topology>
    </subcellularLocation>
    <subcellularLocation>
        <location evidence="2">Basolateral cell membrane</location>
        <topology evidence="2">Peripheral membrane protein</topology>
    </subcellularLocation>
    <subcellularLocation>
        <location evidence="2">Cell junction</location>
    </subcellularLocation>
    <subcellularLocation>
        <location evidence="2">Postsynaptic density membrane</location>
        <topology evidence="2">Peripheral membrane protein</topology>
    </subcellularLocation>
    <subcellularLocation>
        <location evidence="2">Cell junction</location>
        <location evidence="2">Tight junction</location>
    </subcellularLocation>
    <text evidence="2">Mainly basolateral in renal epithelial cells.</text>
</comment>
<comment type="alternative products">
    <event type="alternative splicing"/>
    <isoform>
        <id>Q9Z250-1</id>
        <name>1</name>
        <name>rTIP33</name>
        <name>LIN7Bb</name>
        <name>Lin-7-Bb</name>
        <sequence type="displayed"/>
    </isoform>
    <isoform>
        <id>Q9Z250-2</id>
        <name>2</name>
        <name>LIN7Ba</name>
        <name>Lin-7-Ba</name>
        <sequence type="described" ref="VSP_012860 VSP_012861"/>
    </isoform>
</comment>
<comment type="tissue specificity">
    <text evidence="5 6 11 13">Ubiquitously expressed in brain and detected in lung, liver and testis (at protein level). Expression was detected only in brain.</text>
</comment>
<comment type="developmental stage">
    <text evidence="5">Detected only after the second postnatal week.</text>
</comment>
<comment type="induction">
    <text evidence="8">Up-regulated by cell depolarization and calcium entry through L-type calcium channels.</text>
</comment>
<comment type="domain">
    <text evidence="1">The kinase interacting site is required for proper delivery of ERBB2 to the basolateral membrane.</text>
</comment>
<comment type="domain">
    <text evidence="1">The PDZ domain regulates endocytosis and recycling of the receptor at the membrane.</text>
</comment>
<comment type="domain">
    <text evidence="1">The L27 domain mediates interaction with CASK and is involved in the formation of multimeric complexes and the association of LIN7 to membranes.</text>
</comment>
<comment type="similarity">
    <text evidence="15">Belongs to the lin-7 family.</text>
</comment>
<name>LIN7A_RAT</name>